<name>YAEP_ECOSE</name>
<accession>B6HZG4</accession>
<sequence>MEKYCELIRKRYAEIASGDLGYVPDALGCVLKVLNEMAADDALSEAVREKAAYAAANLLVSDYVNE</sequence>
<evidence type="ECO:0000255" key="1">
    <source>
        <dbReference type="HAMAP-Rule" id="MF_01064"/>
    </source>
</evidence>
<feature type="chain" id="PRO_1000136538" description="UPF0253 protein YaeP">
    <location>
        <begin position="1"/>
        <end position="66"/>
    </location>
</feature>
<gene>
    <name evidence="1" type="primary">yaeP</name>
    <name type="ordered locus">ECSE_0189</name>
</gene>
<protein>
    <recommendedName>
        <fullName evidence="1">UPF0253 protein YaeP</fullName>
    </recommendedName>
</protein>
<reference key="1">
    <citation type="journal article" date="2008" name="DNA Res.">
        <title>Complete genome sequence and comparative analysis of the wild-type commensal Escherichia coli strain SE11 isolated from a healthy adult.</title>
        <authorList>
            <person name="Oshima K."/>
            <person name="Toh H."/>
            <person name="Ogura Y."/>
            <person name="Sasamoto H."/>
            <person name="Morita H."/>
            <person name="Park S.-H."/>
            <person name="Ooka T."/>
            <person name="Iyoda S."/>
            <person name="Taylor T.D."/>
            <person name="Hayashi T."/>
            <person name="Itoh K."/>
            <person name="Hattori M."/>
        </authorList>
    </citation>
    <scope>NUCLEOTIDE SEQUENCE [LARGE SCALE GENOMIC DNA]</scope>
    <source>
        <strain>SE11</strain>
    </source>
</reference>
<proteinExistence type="inferred from homology"/>
<dbReference type="EMBL" id="AP009240">
    <property type="protein sequence ID" value="BAG75713.1"/>
    <property type="molecule type" value="Genomic_DNA"/>
</dbReference>
<dbReference type="RefSeq" id="WP_000417058.1">
    <property type="nucleotide sequence ID" value="NC_011415.1"/>
</dbReference>
<dbReference type="SMR" id="B6HZG4"/>
<dbReference type="KEGG" id="ecy:ECSE_0189"/>
<dbReference type="HOGENOM" id="CLU_190008_0_0_6"/>
<dbReference type="Proteomes" id="UP000008199">
    <property type="component" value="Chromosome"/>
</dbReference>
<dbReference type="HAMAP" id="MF_01064">
    <property type="entry name" value="UPF0253"/>
    <property type="match status" value="1"/>
</dbReference>
<dbReference type="InterPro" id="IPR009624">
    <property type="entry name" value="UPF0253"/>
</dbReference>
<dbReference type="NCBIfam" id="NF003436">
    <property type="entry name" value="PRK04964.1"/>
    <property type="match status" value="1"/>
</dbReference>
<dbReference type="Pfam" id="PF06786">
    <property type="entry name" value="UPF0253"/>
    <property type="match status" value="1"/>
</dbReference>
<organism>
    <name type="scientific">Escherichia coli (strain SE11)</name>
    <dbReference type="NCBI Taxonomy" id="409438"/>
    <lineage>
        <taxon>Bacteria</taxon>
        <taxon>Pseudomonadati</taxon>
        <taxon>Pseudomonadota</taxon>
        <taxon>Gammaproteobacteria</taxon>
        <taxon>Enterobacterales</taxon>
        <taxon>Enterobacteriaceae</taxon>
        <taxon>Escherichia</taxon>
    </lineage>
</organism>
<comment type="similarity">
    <text evidence="1">Belongs to the UPF0253 family.</text>
</comment>